<keyword id="KW-1185">Reference proteome</keyword>
<sequence length="319" mass="36959">MTSKRAEVLAKNSEMSRDEWLIERRKGIGGSDASIILGLNKWKTPFELWLDKTGQVPVSESQSEAAYFGSLLEDIVAKEFEIRSGKKVRRKKAILRHPEYNFILANVDRMIVGEKAILECKTTSAYNLKEWEDEEIPESYIVQVQHYLGVLGPEYRKAYFAVLIGGNKFVWKEIERDDELIDMIFKAEIEFWNDKVLGGQAPALDGSSAAEEYLKKRYAETENNKAIDLTAANRERIQQYLLIKEQISELQSQAKELENQIKHEMKDAEYGFIGNYQACWKPVVSNRIDTKKLKDQFPDVYEKVKKETHFRRFGIKEVS</sequence>
<proteinExistence type="predicted"/>
<accession>P45907</accession>
<gene>
    <name type="primary">yqaJ</name>
    <name type="ordered locus">BSU26290</name>
</gene>
<protein>
    <recommendedName>
        <fullName>Uncharacterized protein YqaJ</fullName>
    </recommendedName>
</protein>
<organism>
    <name type="scientific">Bacillus subtilis (strain 168)</name>
    <dbReference type="NCBI Taxonomy" id="224308"/>
    <lineage>
        <taxon>Bacteria</taxon>
        <taxon>Bacillati</taxon>
        <taxon>Bacillota</taxon>
        <taxon>Bacilli</taxon>
        <taxon>Bacillales</taxon>
        <taxon>Bacillaceae</taxon>
        <taxon>Bacillus</taxon>
    </lineage>
</organism>
<feature type="chain" id="PRO_0000049741" description="Uncharacterized protein YqaJ">
    <location>
        <begin position="1"/>
        <end position="319"/>
    </location>
</feature>
<reference key="1">
    <citation type="journal article" date="1995" name="Microbiology">
        <title>Complete nucleotide sequence of a skin element excised by DNA rearrangement during sporulation in Bacillus subtilis.</title>
        <authorList>
            <person name="Takemaru K."/>
            <person name="Mizuno M."/>
            <person name="Sato T."/>
            <person name="Takeuchi M."/>
            <person name="Kobayashi Y."/>
        </authorList>
    </citation>
    <scope>NUCLEOTIDE SEQUENCE [GENOMIC DNA]</scope>
    <source>
        <strain>168 / JH642</strain>
    </source>
</reference>
<reference key="2">
    <citation type="journal article" date="1996" name="Microbiology">
        <title>Systematic sequencing of the 283 kb 210 degrees-232 degrees region of the Bacillus subtilis genome containing the skin element and many sporulation genes.</title>
        <authorList>
            <person name="Mizuno M."/>
            <person name="Masuda S."/>
            <person name="Takemaru K."/>
            <person name="Hosono S."/>
            <person name="Sato T."/>
            <person name="Takeuchi M."/>
            <person name="Kobayashi Y."/>
        </authorList>
    </citation>
    <scope>NUCLEOTIDE SEQUENCE [GENOMIC DNA]</scope>
    <source>
        <strain>168 / JH642</strain>
    </source>
</reference>
<reference key="3">
    <citation type="journal article" date="1997" name="Nature">
        <title>The complete genome sequence of the Gram-positive bacterium Bacillus subtilis.</title>
        <authorList>
            <person name="Kunst F."/>
            <person name="Ogasawara N."/>
            <person name="Moszer I."/>
            <person name="Albertini A.M."/>
            <person name="Alloni G."/>
            <person name="Azevedo V."/>
            <person name="Bertero M.G."/>
            <person name="Bessieres P."/>
            <person name="Bolotin A."/>
            <person name="Borchert S."/>
            <person name="Borriss R."/>
            <person name="Boursier L."/>
            <person name="Brans A."/>
            <person name="Braun M."/>
            <person name="Brignell S.C."/>
            <person name="Bron S."/>
            <person name="Brouillet S."/>
            <person name="Bruschi C.V."/>
            <person name="Caldwell B."/>
            <person name="Capuano V."/>
            <person name="Carter N.M."/>
            <person name="Choi S.-K."/>
            <person name="Codani J.-J."/>
            <person name="Connerton I.F."/>
            <person name="Cummings N.J."/>
            <person name="Daniel R.A."/>
            <person name="Denizot F."/>
            <person name="Devine K.M."/>
            <person name="Duesterhoeft A."/>
            <person name="Ehrlich S.D."/>
            <person name="Emmerson P.T."/>
            <person name="Entian K.-D."/>
            <person name="Errington J."/>
            <person name="Fabret C."/>
            <person name="Ferrari E."/>
            <person name="Foulger D."/>
            <person name="Fritz C."/>
            <person name="Fujita M."/>
            <person name="Fujita Y."/>
            <person name="Fuma S."/>
            <person name="Galizzi A."/>
            <person name="Galleron N."/>
            <person name="Ghim S.-Y."/>
            <person name="Glaser P."/>
            <person name="Goffeau A."/>
            <person name="Golightly E.J."/>
            <person name="Grandi G."/>
            <person name="Guiseppi G."/>
            <person name="Guy B.J."/>
            <person name="Haga K."/>
            <person name="Haiech J."/>
            <person name="Harwood C.R."/>
            <person name="Henaut A."/>
            <person name="Hilbert H."/>
            <person name="Holsappel S."/>
            <person name="Hosono S."/>
            <person name="Hullo M.-F."/>
            <person name="Itaya M."/>
            <person name="Jones L.-M."/>
            <person name="Joris B."/>
            <person name="Karamata D."/>
            <person name="Kasahara Y."/>
            <person name="Klaerr-Blanchard M."/>
            <person name="Klein C."/>
            <person name="Kobayashi Y."/>
            <person name="Koetter P."/>
            <person name="Koningstein G."/>
            <person name="Krogh S."/>
            <person name="Kumano M."/>
            <person name="Kurita K."/>
            <person name="Lapidus A."/>
            <person name="Lardinois S."/>
            <person name="Lauber J."/>
            <person name="Lazarevic V."/>
            <person name="Lee S.-M."/>
            <person name="Levine A."/>
            <person name="Liu H."/>
            <person name="Masuda S."/>
            <person name="Mauel C."/>
            <person name="Medigue C."/>
            <person name="Medina N."/>
            <person name="Mellado R.P."/>
            <person name="Mizuno M."/>
            <person name="Moestl D."/>
            <person name="Nakai S."/>
            <person name="Noback M."/>
            <person name="Noone D."/>
            <person name="O'Reilly M."/>
            <person name="Ogawa K."/>
            <person name="Ogiwara A."/>
            <person name="Oudega B."/>
            <person name="Park S.-H."/>
            <person name="Parro V."/>
            <person name="Pohl T.M."/>
            <person name="Portetelle D."/>
            <person name="Porwollik S."/>
            <person name="Prescott A.M."/>
            <person name="Presecan E."/>
            <person name="Pujic P."/>
            <person name="Purnelle B."/>
            <person name="Rapoport G."/>
            <person name="Rey M."/>
            <person name="Reynolds S."/>
            <person name="Rieger M."/>
            <person name="Rivolta C."/>
            <person name="Rocha E."/>
            <person name="Roche B."/>
            <person name="Rose M."/>
            <person name="Sadaie Y."/>
            <person name="Sato T."/>
            <person name="Scanlan E."/>
            <person name="Schleich S."/>
            <person name="Schroeter R."/>
            <person name="Scoffone F."/>
            <person name="Sekiguchi J."/>
            <person name="Sekowska A."/>
            <person name="Seror S.J."/>
            <person name="Serror P."/>
            <person name="Shin B.-S."/>
            <person name="Soldo B."/>
            <person name="Sorokin A."/>
            <person name="Tacconi E."/>
            <person name="Takagi T."/>
            <person name="Takahashi H."/>
            <person name="Takemaru K."/>
            <person name="Takeuchi M."/>
            <person name="Tamakoshi A."/>
            <person name="Tanaka T."/>
            <person name="Terpstra P."/>
            <person name="Tognoni A."/>
            <person name="Tosato V."/>
            <person name="Uchiyama S."/>
            <person name="Vandenbol M."/>
            <person name="Vannier F."/>
            <person name="Vassarotti A."/>
            <person name="Viari A."/>
            <person name="Wambutt R."/>
            <person name="Wedler E."/>
            <person name="Wedler H."/>
            <person name="Weitzenegger T."/>
            <person name="Winters P."/>
            <person name="Wipat A."/>
            <person name="Yamamoto H."/>
            <person name="Yamane K."/>
            <person name="Yasumoto K."/>
            <person name="Yata K."/>
            <person name="Yoshida K."/>
            <person name="Yoshikawa H.-F."/>
            <person name="Zumstein E."/>
            <person name="Yoshikawa H."/>
            <person name="Danchin A."/>
        </authorList>
    </citation>
    <scope>NUCLEOTIDE SEQUENCE [LARGE SCALE GENOMIC DNA]</scope>
    <source>
        <strain>168</strain>
    </source>
</reference>
<reference key="4">
    <citation type="journal article" date="1995" name="Gene">
        <title>Analysis of a Bacillus subtilis genome fragment using a co-operative computer system prototype.</title>
        <authorList>
            <person name="Medigue C."/>
            <person name="Moszer I."/>
            <person name="Viari A."/>
            <person name="Danchin A."/>
        </authorList>
    </citation>
    <scope>IDENTIFICATION</scope>
</reference>
<dbReference type="EMBL" id="D32216">
    <property type="protein sequence ID" value="BAA06924.1"/>
    <property type="molecule type" value="Genomic_DNA"/>
</dbReference>
<dbReference type="EMBL" id="D84432">
    <property type="protein sequence ID" value="BAA12385.1"/>
    <property type="molecule type" value="Genomic_DNA"/>
</dbReference>
<dbReference type="EMBL" id="AL009126">
    <property type="protein sequence ID" value="CAB14570.1"/>
    <property type="molecule type" value="Genomic_DNA"/>
</dbReference>
<dbReference type="PIR" id="A69945">
    <property type="entry name" value="A69945"/>
</dbReference>
<dbReference type="RefSeq" id="NP_390506.1">
    <property type="nucleotide sequence ID" value="NC_000964.3"/>
</dbReference>
<dbReference type="RefSeq" id="WP_004398673.1">
    <property type="nucleotide sequence ID" value="NZ_OZ025638.1"/>
</dbReference>
<dbReference type="SMR" id="P45907"/>
<dbReference type="FunCoup" id="P45907">
    <property type="interactions" value="51"/>
</dbReference>
<dbReference type="STRING" id="224308.BSU26290"/>
<dbReference type="PaxDb" id="224308-BSU26290"/>
<dbReference type="EnsemblBacteria" id="CAB14570">
    <property type="protein sequence ID" value="CAB14570"/>
    <property type="gene ID" value="BSU_26290"/>
</dbReference>
<dbReference type="GeneID" id="937681"/>
<dbReference type="KEGG" id="bsu:BSU26290"/>
<dbReference type="PATRIC" id="fig|224308.179.peg.2857"/>
<dbReference type="eggNOG" id="COG5377">
    <property type="taxonomic scope" value="Bacteria"/>
</dbReference>
<dbReference type="InParanoid" id="P45907"/>
<dbReference type="OrthoDB" id="46225at2"/>
<dbReference type="BioCyc" id="BSUB:BSU26290-MONOMER"/>
<dbReference type="Proteomes" id="UP000001570">
    <property type="component" value="Chromosome"/>
</dbReference>
<dbReference type="Gene3D" id="3.90.320.10">
    <property type="match status" value="1"/>
</dbReference>
<dbReference type="InterPro" id="IPR017482">
    <property type="entry name" value="Lambda-type_endonuclease"/>
</dbReference>
<dbReference type="InterPro" id="IPR051703">
    <property type="entry name" value="NF-kappa-B_Signaling_Reg"/>
</dbReference>
<dbReference type="InterPro" id="IPR011604">
    <property type="entry name" value="PDDEXK-like_dom_sf"/>
</dbReference>
<dbReference type="InterPro" id="IPR011335">
    <property type="entry name" value="Restrct_endonuc-II-like"/>
</dbReference>
<dbReference type="InterPro" id="IPR019080">
    <property type="entry name" value="YqaJ_viral_recombinase"/>
</dbReference>
<dbReference type="NCBIfam" id="TIGR03033">
    <property type="entry name" value="phage_rel_nuc"/>
    <property type="match status" value="1"/>
</dbReference>
<dbReference type="PANTHER" id="PTHR46609">
    <property type="entry name" value="EXONUCLEASE, PHAGE-TYPE/RECB, C-TERMINAL DOMAIN-CONTAINING PROTEIN"/>
    <property type="match status" value="1"/>
</dbReference>
<dbReference type="PANTHER" id="PTHR46609:SF6">
    <property type="entry name" value="EXONUCLEASE, PHAGE-TYPE_RECB, C-TERMINAL DOMAIN-CONTAINING PROTEIN-RELATED"/>
    <property type="match status" value="1"/>
</dbReference>
<dbReference type="Pfam" id="PF09588">
    <property type="entry name" value="YqaJ"/>
    <property type="match status" value="1"/>
</dbReference>
<dbReference type="SUPFAM" id="SSF52980">
    <property type="entry name" value="Restriction endonuclease-like"/>
    <property type="match status" value="1"/>
</dbReference>
<name>YQAJ_BACSU</name>